<sequence>MITIKRGLDLPIAGTPSQVINDGKTITKVALLGEEYVGMRPTMHVRVGDEVKKAQILFEDKKNPGVKFTSPASGKVIEVNRGAKRVLQSVVIEVAGDEQITFDSFEASQLASIDRQTVKTQLVESGLWTALRTRPFSKVPAIESSTQAIFVTAMDTNPLAAKPETIINEQSEAFVAGLDILSTLTEGKVYVCKSGTSLPRSSQPNVEEHVFDGPHPAGLVGTHMHFLYPVNAVNVAWSINYQDVIAFGQLFLTGELYTQRVVSLAGPVVNKPRLVRTQIGASLEELTDNELMPGEVRVISGSVLSGVKAAGPVAYLGRYHLQVSVLREGRDKDFLGWAMPGKNKFSVTRSFLGHLFTGQLFNMTTTTNGSDRAMVPIGNYEKVLPLDMEPTLLLRDLCAGDIDSAQRLGALELDEEDLALCTFVCPGKYEYGQLLRECLDKIEKEG</sequence>
<gene>
    <name evidence="1" type="primary">nqrA</name>
</gene>
<evidence type="ECO:0000255" key="1">
    <source>
        <dbReference type="HAMAP-Rule" id="MF_00425"/>
    </source>
</evidence>
<evidence type="ECO:0000305" key="2"/>
<proteinExistence type="inferred from homology"/>
<organism>
    <name type="scientific">Vibrio anguillarum</name>
    <name type="common">Listonella anguillarum</name>
    <dbReference type="NCBI Taxonomy" id="55601"/>
    <lineage>
        <taxon>Bacteria</taxon>
        <taxon>Pseudomonadati</taxon>
        <taxon>Pseudomonadota</taxon>
        <taxon>Gammaproteobacteria</taxon>
        <taxon>Vibrionales</taxon>
        <taxon>Vibrionaceae</taxon>
        <taxon>Vibrio</taxon>
    </lineage>
</organism>
<accession>Q75R64</accession>
<keyword id="KW-0406">Ion transport</keyword>
<keyword id="KW-0520">NAD</keyword>
<keyword id="KW-0915">Sodium</keyword>
<keyword id="KW-0739">Sodium transport</keyword>
<keyword id="KW-1278">Translocase</keyword>
<keyword id="KW-0813">Transport</keyword>
<keyword id="KW-0830">Ubiquinone</keyword>
<dbReference type="EC" id="7.2.1.1" evidence="1"/>
<dbReference type="EMBL" id="AB159077">
    <property type="protein sequence ID" value="BAD14948.1"/>
    <property type="status" value="ALT_INIT"/>
    <property type="molecule type" value="Genomic_DNA"/>
</dbReference>
<dbReference type="SMR" id="Q75R64"/>
<dbReference type="STRING" id="55601.AA407_03515"/>
<dbReference type="GO" id="GO:0016655">
    <property type="term" value="F:oxidoreductase activity, acting on NAD(P)H, quinone or similar compound as acceptor"/>
    <property type="evidence" value="ECO:0007669"/>
    <property type="project" value="UniProtKB-UniRule"/>
</dbReference>
<dbReference type="GO" id="GO:0006814">
    <property type="term" value="P:sodium ion transport"/>
    <property type="evidence" value="ECO:0007669"/>
    <property type="project" value="UniProtKB-UniRule"/>
</dbReference>
<dbReference type="HAMAP" id="MF_00425">
    <property type="entry name" value="NqrA"/>
    <property type="match status" value="1"/>
</dbReference>
<dbReference type="InterPro" id="IPR008703">
    <property type="entry name" value="NqrA"/>
</dbReference>
<dbReference type="InterPro" id="IPR056148">
    <property type="entry name" value="NQRA_2nd"/>
</dbReference>
<dbReference type="InterPro" id="IPR022615">
    <property type="entry name" value="NqrA_C_domain"/>
</dbReference>
<dbReference type="InterPro" id="IPR056147">
    <property type="entry name" value="NQRA_N"/>
</dbReference>
<dbReference type="NCBIfam" id="TIGR01936">
    <property type="entry name" value="nqrA"/>
    <property type="match status" value="1"/>
</dbReference>
<dbReference type="NCBIfam" id="NF003759">
    <property type="entry name" value="PRK05352.1-2"/>
    <property type="match status" value="1"/>
</dbReference>
<dbReference type="PANTHER" id="PTHR37839">
    <property type="entry name" value="NA(+)-TRANSLOCATING NADH-QUINONE REDUCTASE SUBUNIT A"/>
    <property type="match status" value="1"/>
</dbReference>
<dbReference type="PANTHER" id="PTHR37839:SF1">
    <property type="entry name" value="NA(+)-TRANSLOCATING NADH-QUINONE REDUCTASE SUBUNIT A"/>
    <property type="match status" value="1"/>
</dbReference>
<dbReference type="Pfam" id="PF24836">
    <property type="entry name" value="NQRA_2nd"/>
    <property type="match status" value="1"/>
</dbReference>
<dbReference type="Pfam" id="PF05896">
    <property type="entry name" value="NQRA_N"/>
    <property type="match status" value="1"/>
</dbReference>
<dbReference type="Pfam" id="PF11973">
    <property type="entry name" value="NQRA_SLBB"/>
    <property type="match status" value="1"/>
</dbReference>
<comment type="function">
    <text evidence="1">NQR complex catalyzes the reduction of ubiquinone-1 to ubiquinol by two successive reactions, coupled with the transport of Na(+) ions from the cytoplasm to the periplasm. NqrA to NqrE are probably involved in the second step, the conversion of ubisemiquinone to ubiquinol.</text>
</comment>
<comment type="catalytic activity">
    <reaction evidence="1">
        <text>a ubiquinone + n Na(+)(in) + NADH + H(+) = a ubiquinol + n Na(+)(out) + NAD(+)</text>
        <dbReference type="Rhea" id="RHEA:47748"/>
        <dbReference type="Rhea" id="RHEA-COMP:9565"/>
        <dbReference type="Rhea" id="RHEA-COMP:9566"/>
        <dbReference type="ChEBI" id="CHEBI:15378"/>
        <dbReference type="ChEBI" id="CHEBI:16389"/>
        <dbReference type="ChEBI" id="CHEBI:17976"/>
        <dbReference type="ChEBI" id="CHEBI:29101"/>
        <dbReference type="ChEBI" id="CHEBI:57540"/>
        <dbReference type="ChEBI" id="CHEBI:57945"/>
        <dbReference type="EC" id="7.2.1.1"/>
    </reaction>
</comment>
<comment type="subunit">
    <text evidence="1">Composed of six subunits; NqrA, NqrB, NqrC, NqrD, NqrE and NqrF.</text>
</comment>
<comment type="similarity">
    <text evidence="1">Belongs to the NqrA family.</text>
</comment>
<comment type="sequence caution" evidence="2">
    <conflict type="erroneous initiation">
        <sequence resource="EMBL-CDS" id="BAD14948"/>
    </conflict>
</comment>
<name>NQRA_VIBAN</name>
<reference key="1">
    <citation type="submission" date="2004-01" db="EMBL/GenBank/DDBJ databases">
        <title>Cloning, sequencing and transcriptional regulation of Na+-dependent NADH:quinone oxidoreductase gene of Vibrio anguillarum, a fish pathogen.</title>
        <authorList>
            <person name="Fujiwara-Nagata E."/>
            <person name="Eguchi Y."/>
            <person name="Utsumi R."/>
            <person name="Eguchi M."/>
        </authorList>
    </citation>
    <scope>NUCLEOTIDE SEQUENCE [GENOMIC DNA]</scope>
</reference>
<protein>
    <recommendedName>
        <fullName evidence="1">Na(+)-translocating NADH-quinone reductase subunit A</fullName>
        <shortName evidence="1">Na(+)-NQR subunit A</shortName>
        <shortName evidence="1">Na(+)-translocating NQR subunit A</shortName>
        <ecNumber evidence="1">7.2.1.1</ecNumber>
    </recommendedName>
    <alternativeName>
        <fullName evidence="1">NQR complex subunit A</fullName>
    </alternativeName>
    <alternativeName>
        <fullName evidence="1">NQR-1 subunit A</fullName>
    </alternativeName>
</protein>
<feature type="chain" id="PRO_0000214204" description="Na(+)-translocating NADH-quinone reductase subunit A">
    <location>
        <begin position="1"/>
        <end position="446"/>
    </location>
</feature>